<evidence type="ECO:0000250" key="1">
    <source>
        <dbReference type="UniProtKB" id="P22138"/>
    </source>
</evidence>
<evidence type="ECO:0000305" key="2"/>
<proteinExistence type="inferred from homology"/>
<feature type="chain" id="PRO_0000048077" description="DNA-directed RNA polymerase I subunit RPA2">
    <location>
        <begin position="1"/>
        <end position="1196"/>
    </location>
</feature>
<feature type="zinc finger region" description="C4-type" evidence="1">
    <location>
        <begin position="1097"/>
        <end position="1124"/>
    </location>
</feature>
<gene>
    <name type="primary">RPA2</name>
    <name type="ordered locus">ABR029W</name>
</gene>
<accession>Q75DS1</accession>
<comment type="function">
    <text evidence="1">DNA-dependent RNA polymerase catalyzes the transcription of DNA into RNA using the four ribonucleoside triphosphates as substrates. Second largest core component of RNA polymerase I which synthesizes ribosomal RNA precursors. Proposed to contribute to the polymerase catalytic activity and forms the polymerase active center together with the largest subunit. Pol I is composed of mobile elements and RPA2 is part of the core element with the central large cleft and probably a clamp element that moves to open and close the cleft (By similarity).</text>
</comment>
<comment type="catalytic activity">
    <reaction evidence="1">
        <text>RNA(n) + a ribonucleoside 5'-triphosphate = RNA(n+1) + diphosphate</text>
        <dbReference type="Rhea" id="RHEA:21248"/>
        <dbReference type="Rhea" id="RHEA-COMP:14527"/>
        <dbReference type="Rhea" id="RHEA-COMP:17342"/>
        <dbReference type="ChEBI" id="CHEBI:33019"/>
        <dbReference type="ChEBI" id="CHEBI:61557"/>
        <dbReference type="ChEBI" id="CHEBI:140395"/>
        <dbReference type="EC" id="2.7.7.6"/>
    </reaction>
    <physiologicalReaction direction="left-to-right" evidence="1">
        <dbReference type="Rhea" id="RHEA:21249"/>
    </physiologicalReaction>
</comment>
<comment type="subunit">
    <text evidence="1">Component of the RNA polymerase I (Pol I) complex consisting of 14 subunits.</text>
</comment>
<comment type="subcellular location">
    <subcellularLocation>
        <location evidence="1">Nucleus</location>
        <location evidence="1">Nucleolus</location>
    </subcellularLocation>
</comment>
<comment type="similarity">
    <text evidence="2">Belongs to the RNA polymerase beta chain family.</text>
</comment>
<organism>
    <name type="scientific">Eremothecium gossypii (strain ATCC 10895 / CBS 109.51 / FGSC 9923 / NRRL Y-1056)</name>
    <name type="common">Yeast</name>
    <name type="synonym">Ashbya gossypii</name>
    <dbReference type="NCBI Taxonomy" id="284811"/>
    <lineage>
        <taxon>Eukaryota</taxon>
        <taxon>Fungi</taxon>
        <taxon>Dikarya</taxon>
        <taxon>Ascomycota</taxon>
        <taxon>Saccharomycotina</taxon>
        <taxon>Saccharomycetes</taxon>
        <taxon>Saccharomycetales</taxon>
        <taxon>Saccharomycetaceae</taxon>
        <taxon>Eremothecium</taxon>
    </lineage>
</organism>
<sequence length="1196" mass="134285">MSVMEPLSANRTAQFRTLEREARFVSPPKDKSAYPLLYEAVEPHVGSFNALTEGPGGGLLNLGARDIGAKVVFDGKASDENPNYLGNKLALSVTQVSLTKPMSNDGVTAAAERNVFPAEARKRLTTYRGKLLLKLNWSVNDGEETFSEVRDCGPLPVMLQSNRCHLHKMSPQELVEHKEESDELGGYFIVNGIEKLIRMLIVQRRNHPMAIIRPSFANRGTSYSHYGVQIRCVRPDQTSQTNVLHYLNDGQVTFRFSWRKNEYLVPVVLILKALTDASDREIFDGIVGADTSNSFLTDRLELLLRGFKKRFPQLLNRRQVLQYLGDKFRVVLQASPDMSDYLVGQELLRRIVLVHLGDENTDKSNMLMFMIRKLYSLVAGECCPDNPDATQHQEVLLGGFLYGMIVKEKIEEYLQNIKLQIQADVNRGMPVDFKDRKYMTRVLTRINENIGSKLQYFLSTGNLVSQSGLDLQQVSGYTVVAEKINFYRFISHFRMVHRGSFFAQLKTTTVRKLLPESWGFLCPVHTPDGSPCGLLNHFAHKCKISTTQSDVSKIPTLLYSLGVSPAAHVTAAGPSLCCVQLDGKIVGWCSHEQGRIVADTLRYWKVEGKTDGLPLDLEIGYVPASKRGQYPGLYLFGGHSRMMRPVRYLPLDKQDIVGPFEQVYMDIAVTPEEIQNNVHTHVEFSPTNILSILANLTPFSDFNQSPRNMYQCQMGKQTMGTPGVALCHRSDNKLYRLQSGQTPIVKANLYDDYGMDNFPNGTNAVVAVISYTGYDMDDAMIINKSADERGFSYGTVYKTEKIDLSLSRGRGDPVTQHFGFGTDEWPKEWLEKLDEDGLPIIGSYVEEGDPICAYFDDTLNKTKIKTYHSSEPAYIEEVTLIGDESNKFQELQYITIKYRIRRVPQIGDKFSSRHGQKGVCSRKWPTVDMPFSETGIQPDVIINPHAFPSRMTIGMFVESLAGKAGALHGIAQDATPWTFSEEDTPADYFGDQLLKAGYNYHGNEPMYSGATGEELRADIYIGVVYYQRLRHMVNDKFQVRSTGPVNSLTMQPVKGRKRHGGIRVGEMERDALIGHGTSFLLQDRLLNSSDYTQSAVCRECGSILTTQSSVPKIGSMVTIRCRRCAISFDEAKKIITQQDSEDSIFIDDSHIWEDGQGNKFVGGGNTTTVAIPFVLKYLDSELAAMGIRLRYNVDPK</sequence>
<keyword id="KW-0240">DNA-directed RNA polymerase</keyword>
<keyword id="KW-0479">Metal-binding</keyword>
<keyword id="KW-0548">Nucleotidyltransferase</keyword>
<keyword id="KW-0539">Nucleus</keyword>
<keyword id="KW-1185">Reference proteome</keyword>
<keyword id="KW-0804">Transcription</keyword>
<keyword id="KW-0808">Transferase</keyword>
<keyword id="KW-0862">Zinc</keyword>
<keyword id="KW-0863">Zinc-finger</keyword>
<dbReference type="EC" id="2.7.7.6" evidence="1"/>
<dbReference type="EMBL" id="AE016815">
    <property type="protein sequence ID" value="AAS50799.2"/>
    <property type="molecule type" value="Genomic_DNA"/>
</dbReference>
<dbReference type="RefSeq" id="NP_982975.2">
    <property type="nucleotide sequence ID" value="NM_208328.2"/>
</dbReference>
<dbReference type="SMR" id="Q75DS1"/>
<dbReference type="FunCoup" id="Q75DS1">
    <property type="interactions" value="1040"/>
</dbReference>
<dbReference type="STRING" id="284811.Q75DS1"/>
<dbReference type="EnsemblFungi" id="AAS50799">
    <property type="protein sequence ID" value="AAS50799"/>
    <property type="gene ID" value="AGOS_ABR029W"/>
</dbReference>
<dbReference type="GeneID" id="4618998"/>
<dbReference type="KEGG" id="ago:AGOS_ABR029W"/>
<dbReference type="eggNOG" id="KOG0216">
    <property type="taxonomic scope" value="Eukaryota"/>
</dbReference>
<dbReference type="HOGENOM" id="CLU_000524_5_1_1"/>
<dbReference type="InParanoid" id="Q75DS1"/>
<dbReference type="OMA" id="FFGVVHY"/>
<dbReference type="OrthoDB" id="10248617at2759"/>
<dbReference type="Proteomes" id="UP000000591">
    <property type="component" value="Chromosome II"/>
</dbReference>
<dbReference type="GO" id="GO:0005739">
    <property type="term" value="C:mitochondrion"/>
    <property type="evidence" value="ECO:0007669"/>
    <property type="project" value="GOC"/>
</dbReference>
<dbReference type="GO" id="GO:0005736">
    <property type="term" value="C:RNA polymerase I complex"/>
    <property type="evidence" value="ECO:0000318"/>
    <property type="project" value="GO_Central"/>
</dbReference>
<dbReference type="GO" id="GO:0003677">
    <property type="term" value="F:DNA binding"/>
    <property type="evidence" value="ECO:0007669"/>
    <property type="project" value="InterPro"/>
</dbReference>
<dbReference type="GO" id="GO:0003899">
    <property type="term" value="F:DNA-directed RNA polymerase activity"/>
    <property type="evidence" value="ECO:0007669"/>
    <property type="project" value="UniProtKB-EC"/>
</dbReference>
<dbReference type="GO" id="GO:0032549">
    <property type="term" value="F:ribonucleoside binding"/>
    <property type="evidence" value="ECO:0007669"/>
    <property type="project" value="InterPro"/>
</dbReference>
<dbReference type="GO" id="GO:0008270">
    <property type="term" value="F:zinc ion binding"/>
    <property type="evidence" value="ECO:0007669"/>
    <property type="project" value="UniProtKB-KW"/>
</dbReference>
<dbReference type="GO" id="GO:0006363">
    <property type="term" value="P:termination of RNA polymerase I transcription"/>
    <property type="evidence" value="ECO:0007669"/>
    <property type="project" value="EnsemblFungi"/>
</dbReference>
<dbReference type="GO" id="GO:0006362">
    <property type="term" value="P:transcription elongation by RNA polymerase I"/>
    <property type="evidence" value="ECO:0007669"/>
    <property type="project" value="EnsemblFungi"/>
</dbReference>
<dbReference type="GO" id="GO:0006361">
    <property type="term" value="P:transcription initiation at RNA polymerase I promoter"/>
    <property type="evidence" value="ECO:0007669"/>
    <property type="project" value="EnsemblFungi"/>
</dbReference>
<dbReference type="CDD" id="cd00653">
    <property type="entry name" value="RNA_pol_B_RPB2"/>
    <property type="match status" value="1"/>
</dbReference>
<dbReference type="FunFam" id="2.40.270.10:FF:000011">
    <property type="entry name" value="DNA-directed RNA polymerase subunit beta"/>
    <property type="match status" value="1"/>
</dbReference>
<dbReference type="FunFam" id="2.40.50.150:FF:000004">
    <property type="entry name" value="DNA-directed RNA polymerase subunit beta"/>
    <property type="match status" value="1"/>
</dbReference>
<dbReference type="FunFam" id="3.90.1070.20:FF:000003">
    <property type="entry name" value="DNA-directed RNA polymerase subunit beta"/>
    <property type="match status" value="1"/>
</dbReference>
<dbReference type="FunFam" id="3.90.1100.10:FF:000008">
    <property type="entry name" value="DNA-directed RNA polymerase subunit beta"/>
    <property type="match status" value="1"/>
</dbReference>
<dbReference type="FunFam" id="3.90.1100.10:FF:000016">
    <property type="entry name" value="DNA-directed RNA polymerase subunit beta"/>
    <property type="match status" value="1"/>
</dbReference>
<dbReference type="FunFam" id="3.90.1110.10:FF:000007">
    <property type="entry name" value="DNA-directed RNA polymerase subunit beta"/>
    <property type="match status" value="1"/>
</dbReference>
<dbReference type="FunFam" id="3.90.1800.10:FF:000007">
    <property type="entry name" value="DNA-directed RNA polymerase subunit beta"/>
    <property type="match status" value="1"/>
</dbReference>
<dbReference type="Gene3D" id="2.40.50.150">
    <property type="match status" value="1"/>
</dbReference>
<dbReference type="Gene3D" id="3.90.1070.20">
    <property type="match status" value="1"/>
</dbReference>
<dbReference type="Gene3D" id="3.90.1100.10">
    <property type="match status" value="1"/>
</dbReference>
<dbReference type="Gene3D" id="2.40.270.10">
    <property type="entry name" value="DNA-directed RNA polymerase, subunit 2, domain 6"/>
    <property type="match status" value="1"/>
</dbReference>
<dbReference type="Gene3D" id="3.90.1800.10">
    <property type="entry name" value="RNA polymerase alpha subunit dimerisation domain"/>
    <property type="match status" value="1"/>
</dbReference>
<dbReference type="Gene3D" id="3.90.1110.10">
    <property type="entry name" value="RNA polymerase Rpb2, domain 2"/>
    <property type="match status" value="1"/>
</dbReference>
<dbReference type="InterPro" id="IPR015712">
    <property type="entry name" value="DNA-dir_RNA_pol_su2"/>
</dbReference>
<dbReference type="InterPro" id="IPR007120">
    <property type="entry name" value="DNA-dir_RNAP_su2_dom"/>
</dbReference>
<dbReference type="InterPro" id="IPR037033">
    <property type="entry name" value="DNA-dir_RNAP_su2_hyb_sf"/>
</dbReference>
<dbReference type="InterPro" id="IPR007121">
    <property type="entry name" value="RNA_pol_bsu_CS"/>
</dbReference>
<dbReference type="InterPro" id="IPR007644">
    <property type="entry name" value="RNA_pol_bsu_protrusion"/>
</dbReference>
<dbReference type="InterPro" id="IPR007642">
    <property type="entry name" value="RNA_pol_Rpb2_2"/>
</dbReference>
<dbReference type="InterPro" id="IPR037034">
    <property type="entry name" value="RNA_pol_Rpb2_2_sf"/>
</dbReference>
<dbReference type="InterPro" id="IPR007645">
    <property type="entry name" value="RNA_pol_Rpb2_3"/>
</dbReference>
<dbReference type="InterPro" id="IPR007641">
    <property type="entry name" value="RNA_pol_Rpb2_7"/>
</dbReference>
<dbReference type="InterPro" id="IPR014724">
    <property type="entry name" value="RNA_pol_RPB2_OB-fold"/>
</dbReference>
<dbReference type="InterPro" id="IPR009674">
    <property type="entry name" value="Rpa2_dom_4"/>
</dbReference>
<dbReference type="PANTHER" id="PTHR20856">
    <property type="entry name" value="DNA-DIRECTED RNA POLYMERASE I SUBUNIT 2"/>
    <property type="match status" value="1"/>
</dbReference>
<dbReference type="Pfam" id="PF06883">
    <property type="entry name" value="RNA_pol_Rpa2_4"/>
    <property type="match status" value="1"/>
</dbReference>
<dbReference type="Pfam" id="PF04563">
    <property type="entry name" value="RNA_pol_Rpb2_1"/>
    <property type="match status" value="1"/>
</dbReference>
<dbReference type="Pfam" id="PF04561">
    <property type="entry name" value="RNA_pol_Rpb2_2"/>
    <property type="match status" value="1"/>
</dbReference>
<dbReference type="Pfam" id="PF04565">
    <property type="entry name" value="RNA_pol_Rpb2_3"/>
    <property type="match status" value="1"/>
</dbReference>
<dbReference type="Pfam" id="PF00562">
    <property type="entry name" value="RNA_pol_Rpb2_6"/>
    <property type="match status" value="1"/>
</dbReference>
<dbReference type="Pfam" id="PF04560">
    <property type="entry name" value="RNA_pol_Rpb2_7"/>
    <property type="match status" value="1"/>
</dbReference>
<dbReference type="SUPFAM" id="SSF64484">
    <property type="entry name" value="beta and beta-prime subunits of DNA dependent RNA-polymerase"/>
    <property type="match status" value="1"/>
</dbReference>
<dbReference type="PROSITE" id="PS01166">
    <property type="entry name" value="RNA_POL_BETA"/>
    <property type="match status" value="1"/>
</dbReference>
<protein>
    <recommendedName>
        <fullName>DNA-directed RNA polymerase I subunit RPA2</fullName>
        <ecNumber evidence="1">2.7.7.6</ecNumber>
    </recommendedName>
    <alternativeName>
        <fullName>DNA-directed RNA polymerase I polypeptide 2</fullName>
        <shortName>RNA polymerase I subunit 2</shortName>
    </alternativeName>
</protein>
<name>RPA2_EREGS</name>
<reference key="1">
    <citation type="journal article" date="2004" name="Science">
        <title>The Ashbya gossypii genome as a tool for mapping the ancient Saccharomyces cerevisiae genome.</title>
        <authorList>
            <person name="Dietrich F.S."/>
            <person name="Voegeli S."/>
            <person name="Brachat S."/>
            <person name="Lerch A."/>
            <person name="Gates K."/>
            <person name="Steiner S."/>
            <person name="Mohr C."/>
            <person name="Poehlmann R."/>
            <person name="Luedi P."/>
            <person name="Choi S."/>
            <person name="Wing R.A."/>
            <person name="Flavier A."/>
            <person name="Gaffney T.D."/>
            <person name="Philippsen P."/>
        </authorList>
    </citation>
    <scope>NUCLEOTIDE SEQUENCE [LARGE SCALE GENOMIC DNA]</scope>
    <source>
        <strain>ATCC 10895 / CBS 109.51 / FGSC 9923 / NRRL Y-1056</strain>
    </source>
</reference>
<reference key="2">
    <citation type="journal article" date="2013" name="G3 (Bethesda)">
        <title>Genomes of Ashbya fungi isolated from insects reveal four mating-type loci, numerous translocations, lack of transposons, and distinct gene duplications.</title>
        <authorList>
            <person name="Dietrich F.S."/>
            <person name="Voegeli S."/>
            <person name="Kuo S."/>
            <person name="Philippsen P."/>
        </authorList>
    </citation>
    <scope>GENOME REANNOTATION</scope>
    <scope>SEQUENCE REVISION TO 674-688 AND 700-712</scope>
    <source>
        <strain>ATCC 10895 / CBS 109.51 / FGSC 9923 / NRRL Y-1056</strain>
    </source>
</reference>